<sequence>MYIDATQYRNDDEFTQYAKGKVAQLRLMLNSKKSALQKDKELQQQAKAQESALAGEELRRRALSLATQNRMVTL</sequence>
<reference key="1">
    <citation type="journal article" date="1999" name="Virology">
        <title>The complete genome sequence of PM2, the first lipid-containing bacterial virus to be isolated.</title>
        <authorList>
            <person name="Maennistoe R.H."/>
            <person name="Kivelae H.M."/>
            <person name="Paulin L."/>
            <person name="Bamford D.H."/>
            <person name="Bamford J.K."/>
        </authorList>
    </citation>
    <scope>NUCLEOTIDE SEQUENCE [GENOMIC DNA]</scope>
</reference>
<organism>
    <name type="scientific">Pseudoalteromonas phage PM2</name>
    <name type="common">Bacteriophage PM2</name>
    <dbReference type="NCBI Taxonomy" id="2905728"/>
    <lineage>
        <taxon>Viruses</taxon>
        <taxon>Varidnaviria</taxon>
        <taxon>Bamfordvirae</taxon>
        <taxon>Preplasmiviricota</taxon>
        <taxon>Tectiliviricetes</taxon>
        <taxon>Vinavirales</taxon>
        <taxon>Corticoviridae</taxon>
        <taxon>Corticovirus</taxon>
        <taxon>Corticovirus PM2</taxon>
    </lineage>
</organism>
<evidence type="ECO:0000255" key="1"/>
<organismHost>
    <name type="scientific">Pseudoalteromonas espejiana</name>
    <dbReference type="NCBI Taxonomy" id="28107"/>
</organismHost>
<name>GPD_BPPM2</name>
<gene>
    <name type="ORF">d</name>
</gene>
<proteinExistence type="predicted"/>
<feature type="chain" id="PRO_0000339913" description="Uncharacterized protein Gp-d">
    <location>
        <begin position="1"/>
        <end position="74"/>
    </location>
</feature>
<feature type="coiled-coil region" evidence="1">
    <location>
        <begin position="29"/>
        <end position="63"/>
    </location>
</feature>
<keyword id="KW-0175">Coiled coil</keyword>
<keyword id="KW-1185">Reference proteome</keyword>
<dbReference type="EMBL" id="AF155037">
    <property type="protein sequence ID" value="AAD43541.1"/>
    <property type="molecule type" value="Genomic_DNA"/>
</dbReference>
<dbReference type="RefSeq" id="NP_049894.1">
    <property type="nucleotide sequence ID" value="NC_000867.1"/>
</dbReference>
<dbReference type="SMR" id="Q9XJS5"/>
<dbReference type="KEGG" id="vg:1262035"/>
<dbReference type="Proteomes" id="UP000002136">
    <property type="component" value="Genome"/>
</dbReference>
<protein>
    <recommendedName>
        <fullName>Uncharacterized protein Gp-d</fullName>
    </recommendedName>
</protein>
<accession>Q9XJS5</accession>